<name>RS7_SALTI</name>
<organism>
    <name type="scientific">Salmonella typhi</name>
    <dbReference type="NCBI Taxonomy" id="90370"/>
    <lineage>
        <taxon>Bacteria</taxon>
        <taxon>Pseudomonadati</taxon>
        <taxon>Pseudomonadota</taxon>
        <taxon>Gammaproteobacteria</taxon>
        <taxon>Enterobacterales</taxon>
        <taxon>Enterobacteriaceae</taxon>
        <taxon>Salmonella</taxon>
    </lineage>
</organism>
<evidence type="ECO:0000250" key="1"/>
<evidence type="ECO:0000255" key="2">
    <source>
        <dbReference type="HAMAP-Rule" id="MF_00480"/>
    </source>
</evidence>
<evidence type="ECO:0000305" key="3"/>
<gene>
    <name evidence="2" type="primary">rpsG</name>
    <name type="ordered locus">STY4351</name>
    <name type="ordered locus">t4058</name>
</gene>
<reference key="1">
    <citation type="journal article" date="2001" name="Nature">
        <title>Complete genome sequence of a multiple drug resistant Salmonella enterica serovar Typhi CT18.</title>
        <authorList>
            <person name="Parkhill J."/>
            <person name="Dougan G."/>
            <person name="James K.D."/>
            <person name="Thomson N.R."/>
            <person name="Pickard D."/>
            <person name="Wain J."/>
            <person name="Churcher C.M."/>
            <person name="Mungall K.L."/>
            <person name="Bentley S.D."/>
            <person name="Holden M.T.G."/>
            <person name="Sebaihia M."/>
            <person name="Baker S."/>
            <person name="Basham D."/>
            <person name="Brooks K."/>
            <person name="Chillingworth T."/>
            <person name="Connerton P."/>
            <person name="Cronin A."/>
            <person name="Davis P."/>
            <person name="Davies R.M."/>
            <person name="Dowd L."/>
            <person name="White N."/>
            <person name="Farrar J."/>
            <person name="Feltwell T."/>
            <person name="Hamlin N."/>
            <person name="Haque A."/>
            <person name="Hien T.T."/>
            <person name="Holroyd S."/>
            <person name="Jagels K."/>
            <person name="Krogh A."/>
            <person name="Larsen T.S."/>
            <person name="Leather S."/>
            <person name="Moule S."/>
            <person name="O'Gaora P."/>
            <person name="Parry C."/>
            <person name="Quail M.A."/>
            <person name="Rutherford K.M."/>
            <person name="Simmonds M."/>
            <person name="Skelton J."/>
            <person name="Stevens K."/>
            <person name="Whitehead S."/>
            <person name="Barrell B.G."/>
        </authorList>
    </citation>
    <scope>NUCLEOTIDE SEQUENCE [LARGE SCALE GENOMIC DNA]</scope>
    <source>
        <strain>CT18</strain>
    </source>
</reference>
<reference key="2">
    <citation type="journal article" date="2003" name="J. Bacteriol.">
        <title>Comparative genomics of Salmonella enterica serovar Typhi strains Ty2 and CT18.</title>
        <authorList>
            <person name="Deng W."/>
            <person name="Liou S.-R."/>
            <person name="Plunkett G. III"/>
            <person name="Mayhew G.F."/>
            <person name="Rose D.J."/>
            <person name="Burland V."/>
            <person name="Kodoyianni V."/>
            <person name="Schwartz D.C."/>
            <person name="Blattner F.R."/>
        </authorList>
    </citation>
    <scope>NUCLEOTIDE SEQUENCE [LARGE SCALE GENOMIC DNA]</scope>
    <source>
        <strain>ATCC 700931 / Ty2</strain>
    </source>
</reference>
<protein>
    <recommendedName>
        <fullName evidence="2">Small ribosomal subunit protein uS7</fullName>
    </recommendedName>
    <alternativeName>
        <fullName evidence="3">30S ribosomal protein S7</fullName>
    </alternativeName>
</protein>
<sequence>MPRRRVIGQRKILPDPKFGSELLAKFVNILMVDGKKSTAESIVYSALETLAQRSGKSELEAFEVALENVRPTVEVKSRRVGGSTYQVPVEVRPVRRNALAMRWIVEAARKRGDKSMALRLANELSDAADNKGTAVKKREDVHRMAEANKAFAHYRW</sequence>
<comment type="function">
    <text evidence="2">One of the primary rRNA binding proteins, it binds directly to 16S rRNA where it nucleates assembly of the head domain of the 30S subunit. Is located at the subunit interface close to the decoding center, probably blocks exit of the E-site tRNA.</text>
</comment>
<comment type="subunit">
    <text evidence="2">Part of the 30S ribosomal subunit. Contacts proteins S9 and S11.</text>
</comment>
<comment type="similarity">
    <text evidence="2">Belongs to the universal ribosomal protein uS7 family.</text>
</comment>
<feature type="initiator methionine" description="Removed" evidence="1">
    <location>
        <position position="1"/>
    </location>
</feature>
<feature type="chain" id="PRO_0000124335" description="Small ribosomal subunit protein uS7">
    <location>
        <begin position="2"/>
        <end position="156"/>
    </location>
</feature>
<keyword id="KW-0687">Ribonucleoprotein</keyword>
<keyword id="KW-0689">Ribosomal protein</keyword>
<keyword id="KW-0694">RNA-binding</keyword>
<keyword id="KW-0699">rRNA-binding</keyword>
<keyword id="KW-0820">tRNA-binding</keyword>
<dbReference type="EMBL" id="AL513382">
    <property type="protein sequence ID" value="CAD08166.1"/>
    <property type="molecule type" value="Genomic_DNA"/>
</dbReference>
<dbReference type="EMBL" id="AE014613">
    <property type="protein sequence ID" value="AAO71525.1"/>
    <property type="molecule type" value="Genomic_DNA"/>
</dbReference>
<dbReference type="RefSeq" id="NP_458453.1">
    <property type="nucleotide sequence ID" value="NC_003198.1"/>
</dbReference>
<dbReference type="RefSeq" id="WP_001138042.1">
    <property type="nucleotide sequence ID" value="NZ_WSUR01000001.1"/>
</dbReference>
<dbReference type="SMR" id="P0A2B4"/>
<dbReference type="STRING" id="220341.gene:17588179"/>
<dbReference type="GeneID" id="92804583"/>
<dbReference type="KEGG" id="stt:t4058"/>
<dbReference type="KEGG" id="sty:STY4351"/>
<dbReference type="PATRIC" id="fig|220341.7.peg.4446"/>
<dbReference type="eggNOG" id="COG0049">
    <property type="taxonomic scope" value="Bacteria"/>
</dbReference>
<dbReference type="HOGENOM" id="CLU_072226_1_1_6"/>
<dbReference type="OMA" id="DDTHRMA"/>
<dbReference type="OrthoDB" id="9807653at2"/>
<dbReference type="Proteomes" id="UP000000541">
    <property type="component" value="Chromosome"/>
</dbReference>
<dbReference type="Proteomes" id="UP000002670">
    <property type="component" value="Chromosome"/>
</dbReference>
<dbReference type="GO" id="GO:0015935">
    <property type="term" value="C:small ribosomal subunit"/>
    <property type="evidence" value="ECO:0007669"/>
    <property type="project" value="InterPro"/>
</dbReference>
<dbReference type="GO" id="GO:0019843">
    <property type="term" value="F:rRNA binding"/>
    <property type="evidence" value="ECO:0007669"/>
    <property type="project" value="UniProtKB-UniRule"/>
</dbReference>
<dbReference type="GO" id="GO:0003735">
    <property type="term" value="F:structural constituent of ribosome"/>
    <property type="evidence" value="ECO:0007669"/>
    <property type="project" value="InterPro"/>
</dbReference>
<dbReference type="GO" id="GO:0000049">
    <property type="term" value="F:tRNA binding"/>
    <property type="evidence" value="ECO:0007669"/>
    <property type="project" value="UniProtKB-UniRule"/>
</dbReference>
<dbReference type="GO" id="GO:0006412">
    <property type="term" value="P:translation"/>
    <property type="evidence" value="ECO:0007669"/>
    <property type="project" value="UniProtKB-UniRule"/>
</dbReference>
<dbReference type="CDD" id="cd14869">
    <property type="entry name" value="uS7_Bacteria"/>
    <property type="match status" value="1"/>
</dbReference>
<dbReference type="FunFam" id="1.10.455.10:FF:000001">
    <property type="entry name" value="30S ribosomal protein S7"/>
    <property type="match status" value="1"/>
</dbReference>
<dbReference type="Gene3D" id="1.10.455.10">
    <property type="entry name" value="Ribosomal protein S7 domain"/>
    <property type="match status" value="1"/>
</dbReference>
<dbReference type="HAMAP" id="MF_00480_B">
    <property type="entry name" value="Ribosomal_uS7_B"/>
    <property type="match status" value="1"/>
</dbReference>
<dbReference type="InterPro" id="IPR000235">
    <property type="entry name" value="Ribosomal_uS7"/>
</dbReference>
<dbReference type="InterPro" id="IPR005717">
    <property type="entry name" value="Ribosomal_uS7_bac/org-type"/>
</dbReference>
<dbReference type="InterPro" id="IPR020606">
    <property type="entry name" value="Ribosomal_uS7_CS"/>
</dbReference>
<dbReference type="InterPro" id="IPR023798">
    <property type="entry name" value="Ribosomal_uS7_dom"/>
</dbReference>
<dbReference type="InterPro" id="IPR036823">
    <property type="entry name" value="Ribosomal_uS7_dom_sf"/>
</dbReference>
<dbReference type="NCBIfam" id="TIGR01029">
    <property type="entry name" value="rpsG_bact"/>
    <property type="match status" value="1"/>
</dbReference>
<dbReference type="PANTHER" id="PTHR11205">
    <property type="entry name" value="RIBOSOMAL PROTEIN S7"/>
    <property type="match status" value="1"/>
</dbReference>
<dbReference type="Pfam" id="PF00177">
    <property type="entry name" value="Ribosomal_S7"/>
    <property type="match status" value="1"/>
</dbReference>
<dbReference type="PIRSF" id="PIRSF002122">
    <property type="entry name" value="RPS7p_RPS7a_RPS5e_RPS7o"/>
    <property type="match status" value="1"/>
</dbReference>
<dbReference type="SUPFAM" id="SSF47973">
    <property type="entry name" value="Ribosomal protein S7"/>
    <property type="match status" value="1"/>
</dbReference>
<dbReference type="PROSITE" id="PS00052">
    <property type="entry name" value="RIBOSOMAL_S7"/>
    <property type="match status" value="1"/>
</dbReference>
<proteinExistence type="inferred from homology"/>
<accession>P0A2B4</accession>
<accession>P26230</accession>